<gene>
    <name evidence="1" type="primary">rlmN</name>
    <name type="ordered locus">SNSL254_A2720</name>
</gene>
<organism>
    <name type="scientific">Salmonella newport (strain SL254)</name>
    <dbReference type="NCBI Taxonomy" id="423368"/>
    <lineage>
        <taxon>Bacteria</taxon>
        <taxon>Pseudomonadati</taxon>
        <taxon>Pseudomonadota</taxon>
        <taxon>Gammaproteobacteria</taxon>
        <taxon>Enterobacterales</taxon>
        <taxon>Enterobacteriaceae</taxon>
        <taxon>Salmonella</taxon>
    </lineage>
</organism>
<evidence type="ECO:0000255" key="1">
    <source>
        <dbReference type="HAMAP-Rule" id="MF_01849"/>
    </source>
</evidence>
<evidence type="ECO:0000255" key="2">
    <source>
        <dbReference type="PROSITE-ProRule" id="PRU01266"/>
    </source>
</evidence>
<feature type="chain" id="PRO_1000188602" description="Dual-specificity RNA methyltransferase RlmN">
    <location>
        <begin position="1"/>
        <end position="388"/>
    </location>
</feature>
<feature type="domain" description="Radical SAM core" evidence="2">
    <location>
        <begin position="115"/>
        <end position="354"/>
    </location>
</feature>
<feature type="active site" description="Proton acceptor" evidence="1">
    <location>
        <position position="109"/>
    </location>
</feature>
<feature type="active site" description="S-methylcysteine intermediate" evidence="1">
    <location>
        <position position="359"/>
    </location>
</feature>
<feature type="binding site" evidence="1">
    <location>
        <position position="129"/>
    </location>
    <ligand>
        <name>[4Fe-4S] cluster</name>
        <dbReference type="ChEBI" id="CHEBI:49883"/>
        <note>4Fe-4S-S-AdoMet</note>
    </ligand>
</feature>
<feature type="binding site" evidence="1">
    <location>
        <position position="133"/>
    </location>
    <ligand>
        <name>[4Fe-4S] cluster</name>
        <dbReference type="ChEBI" id="CHEBI:49883"/>
        <note>4Fe-4S-S-AdoMet</note>
    </ligand>
</feature>
<feature type="binding site" evidence="1">
    <location>
        <position position="136"/>
    </location>
    <ligand>
        <name>[4Fe-4S] cluster</name>
        <dbReference type="ChEBI" id="CHEBI:49883"/>
        <note>4Fe-4S-S-AdoMet</note>
    </ligand>
</feature>
<feature type="binding site" evidence="1">
    <location>
        <begin position="183"/>
        <end position="184"/>
    </location>
    <ligand>
        <name>S-adenosyl-L-methionine</name>
        <dbReference type="ChEBI" id="CHEBI:59789"/>
    </ligand>
</feature>
<feature type="binding site" evidence="1">
    <location>
        <position position="215"/>
    </location>
    <ligand>
        <name>S-adenosyl-L-methionine</name>
        <dbReference type="ChEBI" id="CHEBI:59789"/>
    </ligand>
</feature>
<feature type="binding site" evidence="1">
    <location>
        <begin position="237"/>
        <end position="239"/>
    </location>
    <ligand>
        <name>S-adenosyl-L-methionine</name>
        <dbReference type="ChEBI" id="CHEBI:59789"/>
    </ligand>
</feature>
<feature type="binding site" evidence="1">
    <location>
        <position position="316"/>
    </location>
    <ligand>
        <name>S-adenosyl-L-methionine</name>
        <dbReference type="ChEBI" id="CHEBI:59789"/>
    </ligand>
</feature>
<feature type="disulfide bond" description="(transient)" evidence="1">
    <location>
        <begin position="122"/>
        <end position="359"/>
    </location>
</feature>
<reference key="1">
    <citation type="journal article" date="2011" name="J. Bacteriol.">
        <title>Comparative genomics of 28 Salmonella enterica isolates: evidence for CRISPR-mediated adaptive sublineage evolution.</title>
        <authorList>
            <person name="Fricke W.F."/>
            <person name="Mammel M.K."/>
            <person name="McDermott P.F."/>
            <person name="Tartera C."/>
            <person name="White D.G."/>
            <person name="Leclerc J.E."/>
            <person name="Ravel J."/>
            <person name="Cebula T.A."/>
        </authorList>
    </citation>
    <scope>NUCLEOTIDE SEQUENCE [LARGE SCALE GENOMIC DNA]</scope>
    <source>
        <strain>SL254</strain>
    </source>
</reference>
<dbReference type="EC" id="2.1.1.192" evidence="1"/>
<dbReference type="EMBL" id="CP001113">
    <property type="protein sequence ID" value="ACF63606.1"/>
    <property type="molecule type" value="Genomic_DNA"/>
</dbReference>
<dbReference type="RefSeq" id="WP_000003206.1">
    <property type="nucleotide sequence ID" value="NZ_CCMR01000001.1"/>
</dbReference>
<dbReference type="SMR" id="B4T0Q1"/>
<dbReference type="KEGG" id="see:SNSL254_A2720"/>
<dbReference type="HOGENOM" id="CLU_029101_0_0_6"/>
<dbReference type="Proteomes" id="UP000008824">
    <property type="component" value="Chromosome"/>
</dbReference>
<dbReference type="GO" id="GO:0005737">
    <property type="term" value="C:cytoplasm"/>
    <property type="evidence" value="ECO:0007669"/>
    <property type="project" value="UniProtKB-SubCell"/>
</dbReference>
<dbReference type="GO" id="GO:0051539">
    <property type="term" value="F:4 iron, 4 sulfur cluster binding"/>
    <property type="evidence" value="ECO:0007669"/>
    <property type="project" value="UniProtKB-UniRule"/>
</dbReference>
<dbReference type="GO" id="GO:0046872">
    <property type="term" value="F:metal ion binding"/>
    <property type="evidence" value="ECO:0007669"/>
    <property type="project" value="UniProtKB-KW"/>
</dbReference>
<dbReference type="GO" id="GO:0070040">
    <property type="term" value="F:rRNA (adenine(2503)-C2-)-methyltransferase activity"/>
    <property type="evidence" value="ECO:0007669"/>
    <property type="project" value="UniProtKB-UniRule"/>
</dbReference>
<dbReference type="GO" id="GO:0019843">
    <property type="term" value="F:rRNA binding"/>
    <property type="evidence" value="ECO:0007669"/>
    <property type="project" value="UniProtKB-UniRule"/>
</dbReference>
<dbReference type="GO" id="GO:0002935">
    <property type="term" value="F:tRNA (adenine(37)-C2)-methyltransferase activity"/>
    <property type="evidence" value="ECO:0007669"/>
    <property type="project" value="UniProtKB-UniRule"/>
</dbReference>
<dbReference type="GO" id="GO:0000049">
    <property type="term" value="F:tRNA binding"/>
    <property type="evidence" value="ECO:0007669"/>
    <property type="project" value="UniProtKB-UniRule"/>
</dbReference>
<dbReference type="GO" id="GO:0070475">
    <property type="term" value="P:rRNA base methylation"/>
    <property type="evidence" value="ECO:0007669"/>
    <property type="project" value="UniProtKB-UniRule"/>
</dbReference>
<dbReference type="GO" id="GO:0030488">
    <property type="term" value="P:tRNA methylation"/>
    <property type="evidence" value="ECO:0007669"/>
    <property type="project" value="UniProtKB-UniRule"/>
</dbReference>
<dbReference type="CDD" id="cd01335">
    <property type="entry name" value="Radical_SAM"/>
    <property type="match status" value="1"/>
</dbReference>
<dbReference type="FunFam" id="1.10.150.530:FF:000001">
    <property type="entry name" value="Dual-specificity RNA methyltransferase RlmN"/>
    <property type="match status" value="1"/>
</dbReference>
<dbReference type="FunFam" id="3.20.20.70:FF:000008">
    <property type="entry name" value="Dual-specificity RNA methyltransferase RlmN"/>
    <property type="match status" value="1"/>
</dbReference>
<dbReference type="Gene3D" id="1.10.150.530">
    <property type="match status" value="1"/>
</dbReference>
<dbReference type="Gene3D" id="3.20.20.70">
    <property type="entry name" value="Aldolase class I"/>
    <property type="match status" value="1"/>
</dbReference>
<dbReference type="HAMAP" id="MF_01849">
    <property type="entry name" value="RNA_methyltr_RlmN"/>
    <property type="match status" value="1"/>
</dbReference>
<dbReference type="InterPro" id="IPR013785">
    <property type="entry name" value="Aldolase_TIM"/>
</dbReference>
<dbReference type="InterPro" id="IPR040072">
    <property type="entry name" value="Methyltransferase_A"/>
</dbReference>
<dbReference type="InterPro" id="IPR048641">
    <property type="entry name" value="RlmN_N"/>
</dbReference>
<dbReference type="InterPro" id="IPR027492">
    <property type="entry name" value="RNA_MTrfase_RlmN"/>
</dbReference>
<dbReference type="InterPro" id="IPR004383">
    <property type="entry name" value="rRNA_lsu_MTrfase_RlmN/Cfr"/>
</dbReference>
<dbReference type="InterPro" id="IPR007197">
    <property type="entry name" value="rSAM"/>
</dbReference>
<dbReference type="NCBIfam" id="NF008396">
    <property type="entry name" value="PRK11194.1"/>
    <property type="match status" value="1"/>
</dbReference>
<dbReference type="NCBIfam" id="TIGR00048">
    <property type="entry name" value="rRNA_mod_RlmN"/>
    <property type="match status" value="1"/>
</dbReference>
<dbReference type="PANTHER" id="PTHR30544">
    <property type="entry name" value="23S RRNA METHYLTRANSFERASE"/>
    <property type="match status" value="1"/>
</dbReference>
<dbReference type="PANTHER" id="PTHR30544:SF5">
    <property type="entry name" value="RADICAL SAM CORE DOMAIN-CONTAINING PROTEIN"/>
    <property type="match status" value="1"/>
</dbReference>
<dbReference type="Pfam" id="PF04055">
    <property type="entry name" value="Radical_SAM"/>
    <property type="match status" value="1"/>
</dbReference>
<dbReference type="Pfam" id="PF21016">
    <property type="entry name" value="RlmN_N"/>
    <property type="match status" value="1"/>
</dbReference>
<dbReference type="PIRSF" id="PIRSF006004">
    <property type="entry name" value="CHP00048"/>
    <property type="match status" value="1"/>
</dbReference>
<dbReference type="SFLD" id="SFLDF00275">
    <property type="entry name" value="adenosine_C2_methyltransferase"/>
    <property type="match status" value="1"/>
</dbReference>
<dbReference type="SFLD" id="SFLDS00029">
    <property type="entry name" value="Radical_SAM"/>
    <property type="match status" value="1"/>
</dbReference>
<dbReference type="SUPFAM" id="SSF102114">
    <property type="entry name" value="Radical SAM enzymes"/>
    <property type="match status" value="1"/>
</dbReference>
<dbReference type="PROSITE" id="PS51918">
    <property type="entry name" value="RADICAL_SAM"/>
    <property type="match status" value="1"/>
</dbReference>
<proteinExistence type="inferred from homology"/>
<name>RLMN_SALNS</name>
<protein>
    <recommendedName>
        <fullName evidence="1">Dual-specificity RNA methyltransferase RlmN</fullName>
        <ecNumber evidence="1">2.1.1.192</ecNumber>
    </recommendedName>
    <alternativeName>
        <fullName evidence="1">23S rRNA (adenine(2503)-C(2))-methyltransferase</fullName>
    </alternativeName>
    <alternativeName>
        <fullName evidence="1">23S rRNA m2A2503 methyltransferase</fullName>
    </alternativeName>
    <alternativeName>
        <fullName evidence="1">Ribosomal RNA large subunit methyltransferase N</fullName>
    </alternativeName>
    <alternativeName>
        <fullName evidence="1">tRNA (adenine(37)-C(2))-methyltransferase</fullName>
    </alternativeName>
    <alternativeName>
        <fullName evidence="1">tRNA m2A37 methyltransferase</fullName>
    </alternativeName>
</protein>
<sequence>MSEQIVTPESSTPVVLNNETKINLLDLNRQQMREFFKNLGEKPFRADQVMKWMYHYCCDNFDEMTDINKVLRGKLKEVAEIRAPEVVEEQRSSDGTIKWAIAVGDQRVETVYIPEDDRATLCVSSQVGCALECKFCSTAQQGFNRNLRVSEIIGQVWRAAKIVGAAKVTGQRPITNVVMMGMGEPLLNLTNVVPAMEIMLDDFGFGLSKRRVTLSTSGVVPALDKLGDMIDVALAISLHAPNDTIRDEIVPINKKYNIETFLGAVRRYLEKSNANQGRVTIEYVMLDHVNDGTEHAHQLAELLKETPCKINLIPWNPFPGAPYGRSSNSRIDRFSKVLMSYGFTTIVRKTRGDDIDAACGQLAGDVIDRTKRTLRKRMQGEVIDIKAI</sequence>
<keyword id="KW-0004">4Fe-4S</keyword>
<keyword id="KW-0963">Cytoplasm</keyword>
<keyword id="KW-1015">Disulfide bond</keyword>
<keyword id="KW-0408">Iron</keyword>
<keyword id="KW-0411">Iron-sulfur</keyword>
<keyword id="KW-0479">Metal-binding</keyword>
<keyword id="KW-0489">Methyltransferase</keyword>
<keyword id="KW-0698">rRNA processing</keyword>
<keyword id="KW-0949">S-adenosyl-L-methionine</keyword>
<keyword id="KW-0808">Transferase</keyword>
<keyword id="KW-0819">tRNA processing</keyword>
<comment type="function">
    <text evidence="1">Specifically methylates position 2 of adenine 2503 in 23S rRNA and position 2 of adenine 37 in tRNAs. m2A2503 modification seems to play a crucial role in the proofreading step occurring at the peptidyl transferase center and thus would serve to optimize ribosomal fidelity.</text>
</comment>
<comment type="catalytic activity">
    <reaction evidence="1">
        <text>adenosine(2503) in 23S rRNA + 2 reduced [2Fe-2S]-[ferredoxin] + 2 S-adenosyl-L-methionine = 2-methyladenosine(2503) in 23S rRNA + 5'-deoxyadenosine + L-methionine + 2 oxidized [2Fe-2S]-[ferredoxin] + S-adenosyl-L-homocysteine</text>
        <dbReference type="Rhea" id="RHEA:42916"/>
        <dbReference type="Rhea" id="RHEA-COMP:10000"/>
        <dbReference type="Rhea" id="RHEA-COMP:10001"/>
        <dbReference type="Rhea" id="RHEA-COMP:10152"/>
        <dbReference type="Rhea" id="RHEA-COMP:10282"/>
        <dbReference type="ChEBI" id="CHEBI:17319"/>
        <dbReference type="ChEBI" id="CHEBI:33737"/>
        <dbReference type="ChEBI" id="CHEBI:33738"/>
        <dbReference type="ChEBI" id="CHEBI:57844"/>
        <dbReference type="ChEBI" id="CHEBI:57856"/>
        <dbReference type="ChEBI" id="CHEBI:59789"/>
        <dbReference type="ChEBI" id="CHEBI:74411"/>
        <dbReference type="ChEBI" id="CHEBI:74497"/>
        <dbReference type="EC" id="2.1.1.192"/>
    </reaction>
</comment>
<comment type="catalytic activity">
    <reaction evidence="1">
        <text>adenosine(37) in tRNA + 2 reduced [2Fe-2S]-[ferredoxin] + 2 S-adenosyl-L-methionine = 2-methyladenosine(37) in tRNA + 5'-deoxyadenosine + L-methionine + 2 oxidized [2Fe-2S]-[ferredoxin] + S-adenosyl-L-homocysteine</text>
        <dbReference type="Rhea" id="RHEA:43332"/>
        <dbReference type="Rhea" id="RHEA-COMP:10000"/>
        <dbReference type="Rhea" id="RHEA-COMP:10001"/>
        <dbReference type="Rhea" id="RHEA-COMP:10162"/>
        <dbReference type="Rhea" id="RHEA-COMP:10485"/>
        <dbReference type="ChEBI" id="CHEBI:17319"/>
        <dbReference type="ChEBI" id="CHEBI:33737"/>
        <dbReference type="ChEBI" id="CHEBI:33738"/>
        <dbReference type="ChEBI" id="CHEBI:57844"/>
        <dbReference type="ChEBI" id="CHEBI:57856"/>
        <dbReference type="ChEBI" id="CHEBI:59789"/>
        <dbReference type="ChEBI" id="CHEBI:74411"/>
        <dbReference type="ChEBI" id="CHEBI:74497"/>
        <dbReference type="EC" id="2.1.1.192"/>
    </reaction>
</comment>
<comment type="cofactor">
    <cofactor evidence="1">
        <name>[4Fe-4S] cluster</name>
        <dbReference type="ChEBI" id="CHEBI:49883"/>
    </cofactor>
    <text evidence="1">Binds 1 [4Fe-4S] cluster. The cluster is coordinated with 3 cysteines and an exchangeable S-adenosyl-L-methionine.</text>
</comment>
<comment type="subcellular location">
    <subcellularLocation>
        <location evidence="1">Cytoplasm</location>
    </subcellularLocation>
</comment>
<comment type="miscellaneous">
    <text evidence="1">Reaction proceeds by a ping-pong mechanism involving intermediate methylation of a conserved cysteine residue.</text>
</comment>
<comment type="similarity">
    <text evidence="1">Belongs to the radical SAM superfamily. RlmN family.</text>
</comment>
<accession>B4T0Q1</accession>